<comment type="function">
    <text evidence="1">Pectinolytic enzyme consist of four classes of enzymes: pectin lyase, polygalacturonase, pectin methylesterase and rhamnogalacturonase. Among pectinolytic enzymes, pectin lyase is the most important in depolymerization of pectin, since it cleaves internal glycosidic bonds of highly methylated pectins. Favors pectate, the anion, over pectin, the methyl ester (By similarity).</text>
</comment>
<comment type="catalytic activity">
    <reaction>
        <text>Eliminative cleavage of (1-&gt;4)-alpha-D-galacturonan to give oligosaccharides with 4-deoxy-alpha-D-galact-4-enuronosyl groups at their non-reducing ends.</text>
        <dbReference type="EC" id="4.2.2.2"/>
    </reaction>
</comment>
<comment type="cofactor">
    <cofactor evidence="1">
        <name>Ca(2+)</name>
        <dbReference type="ChEBI" id="CHEBI:29108"/>
    </cofactor>
    <text evidence="1">Binds 1 Ca(2+) ion per subunit.</text>
</comment>
<comment type="subcellular location">
    <subcellularLocation>
        <location evidence="1">Secreted</location>
    </subcellularLocation>
</comment>
<comment type="similarity">
    <text evidence="3">Belongs to the polysaccharide lyase 1 family.</text>
</comment>
<reference key="1">
    <citation type="journal article" date="2005" name="Nature">
        <title>Genome sequencing and analysis of Aspergillus oryzae.</title>
        <authorList>
            <person name="Machida M."/>
            <person name="Asai K."/>
            <person name="Sano M."/>
            <person name="Tanaka T."/>
            <person name="Kumagai T."/>
            <person name="Terai G."/>
            <person name="Kusumoto K."/>
            <person name="Arima T."/>
            <person name="Akita O."/>
            <person name="Kashiwagi Y."/>
            <person name="Abe K."/>
            <person name="Gomi K."/>
            <person name="Horiuchi H."/>
            <person name="Kitamoto K."/>
            <person name="Kobayashi T."/>
            <person name="Takeuchi M."/>
            <person name="Denning D.W."/>
            <person name="Galagan J.E."/>
            <person name="Nierman W.C."/>
            <person name="Yu J."/>
            <person name="Archer D.B."/>
            <person name="Bennett J.W."/>
            <person name="Bhatnagar D."/>
            <person name="Cleveland T.E."/>
            <person name="Fedorova N.D."/>
            <person name="Gotoh O."/>
            <person name="Horikawa H."/>
            <person name="Hosoyama A."/>
            <person name="Ichinomiya M."/>
            <person name="Igarashi R."/>
            <person name="Iwashita K."/>
            <person name="Juvvadi P.R."/>
            <person name="Kato M."/>
            <person name="Kato Y."/>
            <person name="Kin T."/>
            <person name="Kokubun A."/>
            <person name="Maeda H."/>
            <person name="Maeyama N."/>
            <person name="Maruyama J."/>
            <person name="Nagasaki H."/>
            <person name="Nakajima T."/>
            <person name="Oda K."/>
            <person name="Okada K."/>
            <person name="Paulsen I."/>
            <person name="Sakamoto K."/>
            <person name="Sawano T."/>
            <person name="Takahashi M."/>
            <person name="Takase K."/>
            <person name="Terabayashi Y."/>
            <person name="Wortman J.R."/>
            <person name="Yamada O."/>
            <person name="Yamagata Y."/>
            <person name="Anazawa H."/>
            <person name="Hata Y."/>
            <person name="Koide Y."/>
            <person name="Komori T."/>
            <person name="Koyama Y."/>
            <person name="Minetoki T."/>
            <person name="Suharnan S."/>
            <person name="Tanaka A."/>
            <person name="Isono K."/>
            <person name="Kuhara S."/>
            <person name="Ogasawara N."/>
            <person name="Kikuchi H."/>
        </authorList>
    </citation>
    <scope>NUCLEOTIDE SEQUENCE [LARGE SCALE GENOMIC DNA]</scope>
    <source>
        <strain>ATCC 42149 / RIB 40</strain>
    </source>
</reference>
<accession>Q2U8R6</accession>
<evidence type="ECO:0000250" key="1"/>
<evidence type="ECO:0000255" key="2"/>
<evidence type="ECO:0000305" key="3"/>
<dbReference type="EC" id="4.2.2.2"/>
<dbReference type="EMBL" id="BA000053">
    <property type="protein sequence ID" value="BAE62049.1"/>
    <property type="molecule type" value="Genomic_DNA"/>
</dbReference>
<dbReference type="RefSeq" id="XP_001823182.1">
    <property type="nucleotide sequence ID" value="XM_001823130.1"/>
</dbReference>
<dbReference type="SMR" id="Q2U8R6"/>
<dbReference type="STRING" id="510516.Q2U8R6"/>
<dbReference type="CAZy" id="PL1">
    <property type="family name" value="Polysaccharide Lyase Family 1"/>
</dbReference>
<dbReference type="GlyCosmos" id="Q2U8R6">
    <property type="glycosylation" value="1 site, No reported glycans"/>
</dbReference>
<dbReference type="EnsemblFungi" id="BAE62049">
    <property type="protein sequence ID" value="BAE62049"/>
    <property type="gene ID" value="AO090701000321"/>
</dbReference>
<dbReference type="GeneID" id="5995239"/>
<dbReference type="KEGG" id="aor:AO090701000321"/>
<dbReference type="VEuPathDB" id="FungiDB:AO090701000321"/>
<dbReference type="HOGENOM" id="CLU_021894_2_1_1"/>
<dbReference type="OMA" id="NYWIDHV"/>
<dbReference type="OrthoDB" id="94287at5052"/>
<dbReference type="Proteomes" id="UP000006564">
    <property type="component" value="Chromosome 5"/>
</dbReference>
<dbReference type="GO" id="GO:0005576">
    <property type="term" value="C:extracellular region"/>
    <property type="evidence" value="ECO:0000250"/>
    <property type="project" value="UniProtKB"/>
</dbReference>
<dbReference type="GO" id="GO:0046872">
    <property type="term" value="F:metal ion binding"/>
    <property type="evidence" value="ECO:0007669"/>
    <property type="project" value="UniProtKB-KW"/>
</dbReference>
<dbReference type="GO" id="GO:0030570">
    <property type="term" value="F:pectate lyase activity"/>
    <property type="evidence" value="ECO:0000250"/>
    <property type="project" value="UniProtKB"/>
</dbReference>
<dbReference type="GO" id="GO:0071555">
    <property type="term" value="P:cell wall organization"/>
    <property type="evidence" value="ECO:0007669"/>
    <property type="project" value="UniProtKB-KW"/>
</dbReference>
<dbReference type="GO" id="GO:0045490">
    <property type="term" value="P:pectin catabolic process"/>
    <property type="evidence" value="ECO:0000250"/>
    <property type="project" value="UniProtKB"/>
</dbReference>
<dbReference type="FunFam" id="2.160.20.10:FF:000036">
    <property type="entry name" value="Pectate lyase A"/>
    <property type="match status" value="1"/>
</dbReference>
<dbReference type="Gene3D" id="2.160.20.10">
    <property type="entry name" value="Single-stranded right-handed beta-helix, Pectin lyase-like"/>
    <property type="match status" value="1"/>
</dbReference>
<dbReference type="InterPro" id="IPR002022">
    <property type="entry name" value="Pec_lyase"/>
</dbReference>
<dbReference type="InterPro" id="IPR012334">
    <property type="entry name" value="Pectin_lyas_fold"/>
</dbReference>
<dbReference type="InterPro" id="IPR011050">
    <property type="entry name" value="Pectin_lyase_fold/virulence"/>
</dbReference>
<dbReference type="InterPro" id="IPR045032">
    <property type="entry name" value="PEL"/>
</dbReference>
<dbReference type="PANTHER" id="PTHR31683">
    <property type="entry name" value="PECTATE LYASE 18-RELATED"/>
    <property type="match status" value="1"/>
</dbReference>
<dbReference type="PANTHER" id="PTHR31683:SF18">
    <property type="entry name" value="PECTATE LYASE 21-RELATED"/>
    <property type="match status" value="1"/>
</dbReference>
<dbReference type="Pfam" id="PF00544">
    <property type="entry name" value="Pectate_lyase_4"/>
    <property type="match status" value="1"/>
</dbReference>
<dbReference type="SMART" id="SM00656">
    <property type="entry name" value="Amb_all"/>
    <property type="match status" value="1"/>
</dbReference>
<dbReference type="SUPFAM" id="SSF51126">
    <property type="entry name" value="Pectin lyase-like"/>
    <property type="match status" value="1"/>
</dbReference>
<keyword id="KW-0106">Calcium</keyword>
<keyword id="KW-0119">Carbohydrate metabolism</keyword>
<keyword id="KW-0961">Cell wall biogenesis/degradation</keyword>
<keyword id="KW-0325">Glycoprotein</keyword>
<keyword id="KW-0456">Lyase</keyword>
<keyword id="KW-0479">Metal-binding</keyword>
<keyword id="KW-0624">Polysaccharide degradation</keyword>
<keyword id="KW-1185">Reference proteome</keyword>
<keyword id="KW-0964">Secreted</keyword>
<keyword id="KW-0732">Signal</keyword>
<protein>
    <recommendedName>
        <fullName>Probable pectate lyase A</fullName>
        <ecNumber>4.2.2.2</ecNumber>
    </recommendedName>
</protein>
<organism>
    <name type="scientific">Aspergillus oryzae (strain ATCC 42149 / RIB 40)</name>
    <name type="common">Yellow koji mold</name>
    <dbReference type="NCBI Taxonomy" id="510516"/>
    <lineage>
        <taxon>Eukaryota</taxon>
        <taxon>Fungi</taxon>
        <taxon>Dikarya</taxon>
        <taxon>Ascomycota</taxon>
        <taxon>Pezizomycotina</taxon>
        <taxon>Eurotiomycetes</taxon>
        <taxon>Eurotiomycetidae</taxon>
        <taxon>Eurotiales</taxon>
        <taxon>Aspergillaceae</taxon>
        <taxon>Aspergillus</taxon>
        <taxon>Aspergillus subgen. Circumdati</taxon>
    </lineage>
</organism>
<feature type="signal peptide" evidence="2">
    <location>
        <begin position="1"/>
        <end position="20"/>
    </location>
</feature>
<feature type="chain" id="PRO_0000394562" description="Probable pectate lyase A">
    <location>
        <begin position="21"/>
        <end position="321"/>
    </location>
</feature>
<feature type="active site" evidence="2">
    <location>
        <position position="220"/>
    </location>
</feature>
<feature type="binding site" evidence="1">
    <location>
        <position position="134"/>
    </location>
    <ligand>
        <name>Ca(2+)</name>
        <dbReference type="ChEBI" id="CHEBI:29108"/>
    </ligand>
</feature>
<feature type="binding site" evidence="1">
    <location>
        <position position="163"/>
    </location>
    <ligand>
        <name>Ca(2+)</name>
        <dbReference type="ChEBI" id="CHEBI:29108"/>
    </ligand>
</feature>
<feature type="binding site" evidence="1">
    <location>
        <position position="167"/>
    </location>
    <ligand>
        <name>Ca(2+)</name>
        <dbReference type="ChEBI" id="CHEBI:29108"/>
    </ligand>
</feature>
<feature type="glycosylation site" description="N-linked (GlcNAc...) asparagine" evidence="2">
    <location>
        <position position="93"/>
    </location>
</feature>
<gene>
    <name type="primary">plyA</name>
    <name type="ORF">AO090701000321</name>
</gene>
<name>PLYA_ASPOR</name>
<proteinExistence type="inferred from homology"/>
<sequence length="321" mass="34122">MANFKLFLALAACLSGQALAAPTKTIGKRAAITDVAHGYASQNGGTTGGAGGTTTTVSSYAQFTEAVSSDDAKIVIVDGTITETADQVKVGSNTSIIGKDANAILEGFGLLVKEKENVIIRNLGVKKVLADNGDAIGVQYSNNVWIDHCDVSSDRDHDKDYYDGLIDLTHAADYVTVSNTFVHDHWKAMLFGHSDSNGDEDTGHLRITVNNNYLNNLNSRGPSFRFGTGHLYNNYYLDVSDGINTRQGAQLLVEGNVWSGGKKPLYSTDDGYAVARDNDFGDGENTAPEGTLTSVPYEYDLLAASAVKDAVVGTAGQTLTF</sequence>